<sequence>MTTLSPIEGMLQQLRGLAQTAAGTSSQAAAPAASGGFAGELQRSLSRINATQERAYGLSEAFELGKPGVALNDVMIELQKANVSFQTGVQVRNRLVQAYQEMMNMPV</sequence>
<name>FLIE_CUPPJ</name>
<feature type="chain" id="PRO_1000045871" description="Flagellar hook-basal body complex protein FliE">
    <location>
        <begin position="1"/>
        <end position="107"/>
    </location>
</feature>
<organism>
    <name type="scientific">Cupriavidus pinatubonensis (strain JMP 134 / LMG 1197)</name>
    <name type="common">Cupriavidus necator (strain JMP 134)</name>
    <dbReference type="NCBI Taxonomy" id="264198"/>
    <lineage>
        <taxon>Bacteria</taxon>
        <taxon>Pseudomonadati</taxon>
        <taxon>Pseudomonadota</taxon>
        <taxon>Betaproteobacteria</taxon>
        <taxon>Burkholderiales</taxon>
        <taxon>Burkholderiaceae</taxon>
        <taxon>Cupriavidus</taxon>
    </lineage>
</organism>
<reference key="1">
    <citation type="journal article" date="2010" name="PLoS ONE">
        <title>The complete multipartite genome sequence of Cupriavidus necator JMP134, a versatile pollutant degrader.</title>
        <authorList>
            <person name="Lykidis A."/>
            <person name="Perez-Pantoja D."/>
            <person name="Ledger T."/>
            <person name="Mavromatis K."/>
            <person name="Anderson I.J."/>
            <person name="Ivanova N.N."/>
            <person name="Hooper S.D."/>
            <person name="Lapidus A."/>
            <person name="Lucas S."/>
            <person name="Gonzalez B."/>
            <person name="Kyrpides N.C."/>
        </authorList>
    </citation>
    <scope>NUCLEOTIDE SEQUENCE [LARGE SCALE GENOMIC DNA]</scope>
    <source>
        <strain>JMP134 / LMG 1197</strain>
    </source>
</reference>
<protein>
    <recommendedName>
        <fullName evidence="1">Flagellar hook-basal body complex protein FliE</fullName>
    </recommendedName>
</protein>
<dbReference type="EMBL" id="CP000091">
    <property type="protein sequence ID" value="AAZ64444.1"/>
    <property type="molecule type" value="Genomic_DNA"/>
</dbReference>
<dbReference type="SMR" id="Q46QZ0"/>
<dbReference type="STRING" id="264198.Reut_B5096"/>
<dbReference type="KEGG" id="reu:Reut_B5096"/>
<dbReference type="eggNOG" id="COG1677">
    <property type="taxonomic scope" value="Bacteria"/>
</dbReference>
<dbReference type="HOGENOM" id="CLU_147249_0_2_4"/>
<dbReference type="OrthoDB" id="8909229at2"/>
<dbReference type="GO" id="GO:0009425">
    <property type="term" value="C:bacterial-type flagellum basal body"/>
    <property type="evidence" value="ECO:0007669"/>
    <property type="project" value="UniProtKB-SubCell"/>
</dbReference>
<dbReference type="GO" id="GO:0003774">
    <property type="term" value="F:cytoskeletal motor activity"/>
    <property type="evidence" value="ECO:0007669"/>
    <property type="project" value="InterPro"/>
</dbReference>
<dbReference type="GO" id="GO:0005198">
    <property type="term" value="F:structural molecule activity"/>
    <property type="evidence" value="ECO:0007669"/>
    <property type="project" value="InterPro"/>
</dbReference>
<dbReference type="GO" id="GO:0071973">
    <property type="term" value="P:bacterial-type flagellum-dependent cell motility"/>
    <property type="evidence" value="ECO:0007669"/>
    <property type="project" value="InterPro"/>
</dbReference>
<dbReference type="HAMAP" id="MF_00724">
    <property type="entry name" value="FliE"/>
    <property type="match status" value="1"/>
</dbReference>
<dbReference type="InterPro" id="IPR001624">
    <property type="entry name" value="FliE"/>
</dbReference>
<dbReference type="NCBIfam" id="TIGR00205">
    <property type="entry name" value="fliE"/>
    <property type="match status" value="1"/>
</dbReference>
<dbReference type="PANTHER" id="PTHR34653">
    <property type="match status" value="1"/>
</dbReference>
<dbReference type="PANTHER" id="PTHR34653:SF1">
    <property type="entry name" value="FLAGELLAR HOOK-BASAL BODY COMPLEX PROTEIN FLIE"/>
    <property type="match status" value="1"/>
</dbReference>
<dbReference type="Pfam" id="PF02049">
    <property type="entry name" value="FliE"/>
    <property type="match status" value="1"/>
</dbReference>
<dbReference type="PRINTS" id="PR01006">
    <property type="entry name" value="FLGHOOKFLIE"/>
</dbReference>
<proteinExistence type="inferred from homology"/>
<keyword id="KW-0975">Bacterial flagellum</keyword>
<comment type="subcellular location">
    <subcellularLocation>
        <location evidence="1">Bacterial flagellum basal body</location>
    </subcellularLocation>
</comment>
<comment type="similarity">
    <text evidence="1">Belongs to the FliE family.</text>
</comment>
<accession>Q46QZ0</accession>
<evidence type="ECO:0000255" key="1">
    <source>
        <dbReference type="HAMAP-Rule" id="MF_00724"/>
    </source>
</evidence>
<gene>
    <name evidence="1" type="primary">fliE</name>
    <name type="ordered locus">Reut_B5096</name>
</gene>